<proteinExistence type="evidence at protein level"/>
<keyword id="KW-0025">Alternative splicing</keyword>
<keyword id="KW-1269">Autism</keyword>
<keyword id="KW-1268">Autism spectrum disorder</keyword>
<keyword id="KW-0130">Cell adhesion</keyword>
<keyword id="KW-0965">Cell junction</keyword>
<keyword id="KW-0966">Cell projection</keyword>
<keyword id="KW-0175">Coiled coil</keyword>
<keyword id="KW-0217">Developmental protein</keyword>
<keyword id="KW-0225">Disease variant</keyword>
<keyword id="KW-0325">Glycoprotein</keyword>
<keyword id="KW-0488">Methylation</keyword>
<keyword id="KW-0539">Nucleus</keyword>
<keyword id="KW-0597">Phosphoprotein</keyword>
<keyword id="KW-1267">Proteomics identification</keyword>
<keyword id="KW-1185">Reference proteome</keyword>
<keyword id="KW-0677">Repeat</keyword>
<keyword id="KW-0804">Transcription</keyword>
<keyword id="KW-0805">Transcription regulation</keyword>
<keyword id="KW-0879">Wnt signaling pathway</keyword>
<dbReference type="EMBL" id="U96136">
    <property type="protein sequence ID" value="AAC63103.1"/>
    <property type="molecule type" value="mRNA"/>
</dbReference>
<dbReference type="EMBL" id="AB013805">
    <property type="protein sequence ID" value="BAA36163.1"/>
    <property type="molecule type" value="mRNA"/>
</dbReference>
<dbReference type="EMBL" id="AC003089">
    <property type="protein sequence ID" value="AAB83940.1"/>
    <property type="molecule type" value="Genomic_DNA"/>
</dbReference>
<dbReference type="EMBL" id="EU350953">
    <property type="protein sequence ID" value="ABY59658.1"/>
    <property type="molecule type" value="Genomic_DNA"/>
</dbReference>
<dbReference type="EMBL" id="AC003954">
    <property type="status" value="NOT_ANNOTATED_CDS"/>
    <property type="molecule type" value="Genomic_DNA"/>
</dbReference>
<dbReference type="EMBL" id="AC004633">
    <property type="status" value="NOT_ANNOTATED_CDS"/>
    <property type="molecule type" value="Genomic_DNA"/>
</dbReference>
<dbReference type="EMBL" id="AC004648">
    <property type="status" value="NOT_ANNOTATED_CDS"/>
    <property type="molecule type" value="Genomic_DNA"/>
</dbReference>
<dbReference type="EMBL" id="AC005367">
    <property type="status" value="NOT_ANNOTATED_CDS"/>
    <property type="molecule type" value="Genomic_DNA"/>
</dbReference>
<dbReference type="EMBL" id="AC005610">
    <property type="status" value="NOT_ANNOTATED_CDS"/>
    <property type="molecule type" value="Genomic_DNA"/>
</dbReference>
<dbReference type="EMBL" id="AC010433">
    <property type="status" value="NOT_ANNOTATED_CDS"/>
    <property type="molecule type" value="Genomic_DNA"/>
</dbReference>
<dbReference type="EMBL" id="AC010626">
    <property type="status" value="NOT_ANNOTATED_CDS"/>
    <property type="molecule type" value="Genomic_DNA"/>
</dbReference>
<dbReference type="EMBL" id="AC113390">
    <property type="status" value="NOT_ANNOTATED_CDS"/>
    <property type="molecule type" value="Genomic_DNA"/>
</dbReference>
<dbReference type="EMBL" id="AC127460">
    <property type="status" value="NOT_ANNOTATED_CDS"/>
    <property type="molecule type" value="Genomic_DNA"/>
</dbReference>
<dbReference type="EMBL" id="CH471102">
    <property type="protein sequence ID" value="EAX08053.1"/>
    <property type="molecule type" value="Genomic_DNA"/>
</dbReference>
<dbReference type="EMBL" id="U81004">
    <property type="protein sequence ID" value="AAD00453.1"/>
    <property type="molecule type" value="mRNA"/>
</dbReference>
<dbReference type="EMBL" id="U52351">
    <property type="protein sequence ID" value="AAB97957.1"/>
    <property type="molecule type" value="mRNA"/>
</dbReference>
<dbReference type="EMBL" id="U72665">
    <property type="protein sequence ID" value="AAB68599.1"/>
    <property type="status" value="ALT_INIT"/>
    <property type="molecule type" value="mRNA"/>
</dbReference>
<dbReference type="EMBL" id="AF035302">
    <property type="protein sequence ID" value="AAB88185.1"/>
    <property type="status" value="ALT_FRAME"/>
    <property type="molecule type" value="mRNA"/>
</dbReference>
<dbReference type="EMBL" id="U52828">
    <property type="protein sequence ID" value="AAB96357.1"/>
    <property type="molecule type" value="mRNA"/>
</dbReference>
<dbReference type="CCDS" id="CCDS3881.1">
    <molecule id="Q9UQB3-1"/>
</dbReference>
<dbReference type="RefSeq" id="NP_001275644.1">
    <property type="nucleotide sequence ID" value="NM_001288715.1"/>
</dbReference>
<dbReference type="RefSeq" id="NP_001275645.1">
    <property type="nucleotide sequence ID" value="NM_001288716.1"/>
</dbReference>
<dbReference type="RefSeq" id="NP_001275646.1">
    <property type="nucleotide sequence ID" value="NM_001288717.1"/>
</dbReference>
<dbReference type="RefSeq" id="NP_001323.1">
    <molecule id="Q9UQB3-1"/>
    <property type="nucleotide sequence ID" value="NM_001332.4"/>
</dbReference>
<dbReference type="SMR" id="Q9UQB3"/>
<dbReference type="BioGRID" id="107882">
    <property type="interactions" value="25"/>
</dbReference>
<dbReference type="DIP" id="DIP-1138N"/>
<dbReference type="FunCoup" id="Q9UQB3">
    <property type="interactions" value="841"/>
</dbReference>
<dbReference type="IntAct" id="Q9UQB3">
    <property type="interactions" value="23"/>
</dbReference>
<dbReference type="MINT" id="Q9UQB3"/>
<dbReference type="STRING" id="9606.ENSP00000307134"/>
<dbReference type="GlyCosmos" id="Q9UQB3">
    <property type="glycosylation" value="7 sites, 1 glycan"/>
</dbReference>
<dbReference type="GlyGen" id="Q9UQB3">
    <property type="glycosylation" value="13 sites, 1 O-linked glycan (13 sites)"/>
</dbReference>
<dbReference type="iPTMnet" id="Q9UQB3"/>
<dbReference type="PhosphoSitePlus" id="Q9UQB3"/>
<dbReference type="SwissPalm" id="Q9UQB3"/>
<dbReference type="BioMuta" id="CTNND2"/>
<dbReference type="DMDM" id="84028193"/>
<dbReference type="jPOST" id="Q9UQB3"/>
<dbReference type="MassIVE" id="Q9UQB3"/>
<dbReference type="PaxDb" id="9606-ENSP00000307134"/>
<dbReference type="PeptideAtlas" id="Q9UQB3"/>
<dbReference type="ProteomicsDB" id="85530">
    <molecule id="Q9UQB3-1"/>
</dbReference>
<dbReference type="ProteomicsDB" id="85531">
    <molecule id="Q9UQB3-2"/>
</dbReference>
<dbReference type="Antibodypedia" id="9404">
    <property type="antibodies" value="191 antibodies from 30 providers"/>
</dbReference>
<dbReference type="DNASU" id="1501"/>
<dbReference type="Ensembl" id="ENST00000304623.13">
    <molecule id="Q9UQB3-1"/>
    <property type="protein sequence ID" value="ENSP00000307134.8"/>
    <property type="gene ID" value="ENSG00000169862.21"/>
</dbReference>
<dbReference type="GeneID" id="1501"/>
<dbReference type="KEGG" id="hsa:1501"/>
<dbReference type="MANE-Select" id="ENST00000304623.13">
    <property type="protein sequence ID" value="ENSP00000307134.8"/>
    <property type="RefSeq nucleotide sequence ID" value="NM_001332.4"/>
    <property type="RefSeq protein sequence ID" value="NP_001323.1"/>
</dbReference>
<dbReference type="UCSC" id="uc003jfa.3">
    <molecule id="Q9UQB3-1"/>
    <property type="organism name" value="human"/>
</dbReference>
<dbReference type="AGR" id="HGNC:2516"/>
<dbReference type="CTD" id="1501"/>
<dbReference type="DisGeNET" id="1501"/>
<dbReference type="GeneCards" id="CTNND2"/>
<dbReference type="HGNC" id="HGNC:2516">
    <property type="gene designation" value="CTNND2"/>
</dbReference>
<dbReference type="HPA" id="ENSG00000169862">
    <property type="expression patterns" value="Tissue enriched (brain)"/>
</dbReference>
<dbReference type="MalaCards" id="CTNND2"/>
<dbReference type="MIM" id="604275">
    <property type="type" value="gene"/>
</dbReference>
<dbReference type="neXtProt" id="NX_Q9UQB3"/>
<dbReference type="OpenTargets" id="ENSG00000169862"/>
<dbReference type="Orphanet" id="178469">
    <property type="disease" value="Autosomal dominant non-syndromic intellectual disability"/>
</dbReference>
<dbReference type="Orphanet" id="86814">
    <property type="disease" value="Familialadult myoclonic epilepsy"/>
</dbReference>
<dbReference type="Orphanet" id="281">
    <property type="disease" value="Monosomy 5p syndrome"/>
</dbReference>
<dbReference type="PharmGKB" id="PA27017"/>
<dbReference type="VEuPathDB" id="HostDB:ENSG00000169862"/>
<dbReference type="eggNOG" id="KOG1048">
    <property type="taxonomic scope" value="Eukaryota"/>
</dbReference>
<dbReference type="GeneTree" id="ENSGT00940000154952"/>
<dbReference type="HOGENOM" id="CLU_007897_0_0_1"/>
<dbReference type="InParanoid" id="Q9UQB3"/>
<dbReference type="OMA" id="RSLYKKX"/>
<dbReference type="OrthoDB" id="3245100at2759"/>
<dbReference type="PAN-GO" id="Q9UQB3">
    <property type="GO annotations" value="9 GO annotations based on evolutionary models"/>
</dbReference>
<dbReference type="PhylomeDB" id="Q9UQB3"/>
<dbReference type="TreeFam" id="TF321877"/>
<dbReference type="PathwayCommons" id="Q9UQB3"/>
<dbReference type="SignaLink" id="Q9UQB3"/>
<dbReference type="SIGNOR" id="Q9UQB3"/>
<dbReference type="BioGRID-ORCS" id="1501">
    <property type="hits" value="8 hits in 1144 CRISPR screens"/>
</dbReference>
<dbReference type="CD-CODE" id="FB4E32DD">
    <property type="entry name" value="Presynaptic clusters and postsynaptic densities"/>
</dbReference>
<dbReference type="ChiTaRS" id="CTNND2">
    <property type="organism name" value="human"/>
</dbReference>
<dbReference type="GenomeRNAi" id="1501"/>
<dbReference type="Pharos" id="Q9UQB3">
    <property type="development level" value="Tbio"/>
</dbReference>
<dbReference type="PRO" id="PR:Q9UQB3"/>
<dbReference type="Proteomes" id="UP000005640">
    <property type="component" value="Chromosome 5"/>
</dbReference>
<dbReference type="RNAct" id="Q9UQB3">
    <property type="molecule type" value="protein"/>
</dbReference>
<dbReference type="Bgee" id="ENSG00000169862">
    <property type="expression patterns" value="Expressed in cortical plate and 147 other cell types or tissues"/>
</dbReference>
<dbReference type="ExpressionAtlas" id="Q9UQB3">
    <property type="expression patterns" value="baseline and differential"/>
</dbReference>
<dbReference type="GO" id="GO:0005912">
    <property type="term" value="C:adherens junction"/>
    <property type="evidence" value="ECO:0000318"/>
    <property type="project" value="GO_Central"/>
</dbReference>
<dbReference type="GO" id="GO:0005737">
    <property type="term" value="C:cytoplasm"/>
    <property type="evidence" value="ECO:0000318"/>
    <property type="project" value="GO_Central"/>
</dbReference>
<dbReference type="GO" id="GO:0030425">
    <property type="term" value="C:dendrite"/>
    <property type="evidence" value="ECO:0007669"/>
    <property type="project" value="UniProtKB-SubCell"/>
</dbReference>
<dbReference type="GO" id="GO:0005634">
    <property type="term" value="C:nucleus"/>
    <property type="evidence" value="ECO:0000318"/>
    <property type="project" value="GO_Central"/>
</dbReference>
<dbReference type="GO" id="GO:0043204">
    <property type="term" value="C:perikaryon"/>
    <property type="evidence" value="ECO:0000314"/>
    <property type="project" value="UniProtKB"/>
</dbReference>
<dbReference type="GO" id="GO:0005886">
    <property type="term" value="C:plasma membrane"/>
    <property type="evidence" value="ECO:0000318"/>
    <property type="project" value="GO_Central"/>
</dbReference>
<dbReference type="GO" id="GO:0014069">
    <property type="term" value="C:postsynaptic density"/>
    <property type="evidence" value="ECO:0000318"/>
    <property type="project" value="GO_Central"/>
</dbReference>
<dbReference type="GO" id="GO:0008013">
    <property type="term" value="F:beta-catenin binding"/>
    <property type="evidence" value="ECO:0000353"/>
    <property type="project" value="UniProtKB"/>
</dbReference>
<dbReference type="GO" id="GO:0045296">
    <property type="term" value="F:cadherin binding"/>
    <property type="evidence" value="ECO:0000318"/>
    <property type="project" value="GO_Central"/>
</dbReference>
<dbReference type="GO" id="GO:0007155">
    <property type="term" value="P:cell adhesion"/>
    <property type="evidence" value="ECO:0000304"/>
    <property type="project" value="ProtInc"/>
</dbReference>
<dbReference type="GO" id="GO:0098609">
    <property type="term" value="P:cell-cell adhesion"/>
    <property type="evidence" value="ECO:0000318"/>
    <property type="project" value="GO_Central"/>
</dbReference>
<dbReference type="GO" id="GO:0060997">
    <property type="term" value="P:dendritic spine morphogenesis"/>
    <property type="evidence" value="ECO:0000315"/>
    <property type="project" value="UniProtKB"/>
</dbReference>
<dbReference type="GO" id="GO:0060828">
    <property type="term" value="P:regulation of canonical Wnt signaling pathway"/>
    <property type="evidence" value="ECO:0000315"/>
    <property type="project" value="UniProtKB"/>
</dbReference>
<dbReference type="GO" id="GO:0007165">
    <property type="term" value="P:signal transduction"/>
    <property type="evidence" value="ECO:0000304"/>
    <property type="project" value="ProtInc"/>
</dbReference>
<dbReference type="GO" id="GO:0050808">
    <property type="term" value="P:synapse organization"/>
    <property type="evidence" value="ECO:0000315"/>
    <property type="project" value="UniProtKB"/>
</dbReference>
<dbReference type="GO" id="GO:0016055">
    <property type="term" value="P:Wnt signaling pathway"/>
    <property type="evidence" value="ECO:0007669"/>
    <property type="project" value="UniProtKB-KW"/>
</dbReference>
<dbReference type="FunFam" id="1.25.10.10:FF:001123">
    <property type="entry name" value="Catenin (cadherin-associated protein), delta 2a"/>
    <property type="match status" value="1"/>
</dbReference>
<dbReference type="FunFam" id="1.25.10.10:FF:001160">
    <property type="entry name" value="Catenin delta 2"/>
    <property type="match status" value="1"/>
</dbReference>
<dbReference type="Gene3D" id="1.25.10.10">
    <property type="entry name" value="Leucine-rich Repeat Variant"/>
    <property type="match status" value="1"/>
</dbReference>
<dbReference type="InterPro" id="IPR011989">
    <property type="entry name" value="ARM-like"/>
</dbReference>
<dbReference type="InterPro" id="IPR016024">
    <property type="entry name" value="ARM-type_fold"/>
</dbReference>
<dbReference type="InterPro" id="IPR000225">
    <property type="entry name" value="Armadillo"/>
</dbReference>
<dbReference type="InterPro" id="IPR028435">
    <property type="entry name" value="Plakophilin/d_Catenin"/>
</dbReference>
<dbReference type="PANTHER" id="PTHR10372:SF9">
    <property type="entry name" value="CATENIN DELTA-2"/>
    <property type="match status" value="1"/>
</dbReference>
<dbReference type="PANTHER" id="PTHR10372">
    <property type="entry name" value="PLAKOPHILLIN-RELATED"/>
    <property type="match status" value="1"/>
</dbReference>
<dbReference type="Pfam" id="PF00514">
    <property type="entry name" value="Arm"/>
    <property type="match status" value="4"/>
</dbReference>
<dbReference type="SMART" id="SM00185">
    <property type="entry name" value="ARM"/>
    <property type="match status" value="7"/>
</dbReference>
<dbReference type="SUPFAM" id="SSF48371">
    <property type="entry name" value="ARM repeat"/>
    <property type="match status" value="1"/>
</dbReference>
<dbReference type="PROSITE" id="PS50176">
    <property type="entry name" value="ARM_REPEAT"/>
    <property type="match status" value="3"/>
</dbReference>
<reference key="1">
    <citation type="journal article" date="1997" name="NeuroReport">
        <title>Presenilin 1 interaction in the brain with a novel member of the Armadillo family.</title>
        <authorList>
            <person name="Zhou J."/>
            <person name="Liyanage U."/>
            <person name="Medina M."/>
            <person name="Ho C."/>
            <person name="Simmons A.D."/>
            <person name="Lovett M."/>
            <person name="Kosik K.S."/>
        </authorList>
    </citation>
    <scope>NUCLEOTIDE SEQUENCE [MRNA] (ISOFORM 1)</scope>
    <scope>INTERACTION WITH PSEN1</scope>
</reference>
<reference key="2">
    <citation type="journal article" date="1999" name="J. Cell Biol.">
        <title>Delta-catenin, an adhesive junction-associated protein which promotes cell scattering.</title>
        <authorList>
            <person name="Lu Q."/>
            <person name="Paredes M."/>
            <person name="Medina M."/>
            <person name="Zhou J."/>
            <person name="Cavallo R."/>
            <person name="Peifer M."/>
            <person name="Orecchio L."/>
            <person name="Kosik K.S."/>
        </authorList>
    </citation>
    <scope>NUCLEOTIDE SEQUENCE [MRNA] (ISOFORM 1)</scope>
    <scope>FUNCTION</scope>
    <source>
        <tissue>Brain</tissue>
    </source>
</reference>
<reference key="3">
    <citation type="journal article" date="1999" name="NeuroReport">
        <title>Isolation of human delta-catenin and its binding specificity with presenilin 1.</title>
        <authorList>
            <person name="Tanahashi H."/>
            <person name="Tabira T."/>
        </authorList>
    </citation>
    <scope>NUCLEOTIDE SEQUENCE [MRNA] (ISOFORM 1)</scope>
    <scope>INTERACTION WITH PSEN1</scope>
    <source>
        <tissue>Fetal brain</tissue>
    </source>
</reference>
<reference key="4">
    <citation type="submission" date="2007-12" db="EMBL/GenBank/DDBJ databases">
        <authorList>
            <consortium name="NIEHS SNPs program"/>
        </authorList>
    </citation>
    <scope>NUCLEOTIDE SEQUENCE [GENOMIC DNA]</scope>
    <scope>VARIANTS CYS-275; THR-482 AND ARG-810</scope>
</reference>
<reference key="5">
    <citation type="journal article" date="2004" name="Nature">
        <title>The DNA sequence and comparative analysis of human chromosome 5.</title>
        <authorList>
            <person name="Schmutz J."/>
            <person name="Martin J."/>
            <person name="Terry A."/>
            <person name="Couronne O."/>
            <person name="Grimwood J."/>
            <person name="Lowry S."/>
            <person name="Gordon L.A."/>
            <person name="Scott D."/>
            <person name="Xie G."/>
            <person name="Huang W."/>
            <person name="Hellsten U."/>
            <person name="Tran-Gyamfi M."/>
            <person name="She X."/>
            <person name="Prabhakar S."/>
            <person name="Aerts A."/>
            <person name="Altherr M."/>
            <person name="Bajorek E."/>
            <person name="Black S."/>
            <person name="Branscomb E."/>
            <person name="Caoile C."/>
            <person name="Challacombe J.F."/>
            <person name="Chan Y.M."/>
            <person name="Denys M."/>
            <person name="Detter J.C."/>
            <person name="Escobar J."/>
            <person name="Flowers D."/>
            <person name="Fotopulos D."/>
            <person name="Glavina T."/>
            <person name="Gomez M."/>
            <person name="Gonzales E."/>
            <person name="Goodstein D."/>
            <person name="Grigoriev I."/>
            <person name="Groza M."/>
            <person name="Hammon N."/>
            <person name="Hawkins T."/>
            <person name="Haydu L."/>
            <person name="Israni S."/>
            <person name="Jett J."/>
            <person name="Kadner K."/>
            <person name="Kimball H."/>
            <person name="Kobayashi A."/>
            <person name="Lopez F."/>
            <person name="Lou Y."/>
            <person name="Martinez D."/>
            <person name="Medina C."/>
            <person name="Morgan J."/>
            <person name="Nandkeshwar R."/>
            <person name="Noonan J.P."/>
            <person name="Pitluck S."/>
            <person name="Pollard M."/>
            <person name="Predki P."/>
            <person name="Priest J."/>
            <person name="Ramirez L."/>
            <person name="Retterer J."/>
            <person name="Rodriguez A."/>
            <person name="Rogers S."/>
            <person name="Salamov A."/>
            <person name="Salazar A."/>
            <person name="Thayer N."/>
            <person name="Tice H."/>
            <person name="Tsai M."/>
            <person name="Ustaszewska A."/>
            <person name="Vo N."/>
            <person name="Wheeler J."/>
            <person name="Wu K."/>
            <person name="Yang J."/>
            <person name="Dickson M."/>
            <person name="Cheng J.-F."/>
            <person name="Eichler E.E."/>
            <person name="Olsen A."/>
            <person name="Pennacchio L.A."/>
            <person name="Rokhsar D.S."/>
            <person name="Richardson P."/>
            <person name="Lucas S.M."/>
            <person name="Myers R.M."/>
            <person name="Rubin E.M."/>
        </authorList>
    </citation>
    <scope>NUCLEOTIDE SEQUENCE [LARGE SCALE GENOMIC DNA]</scope>
</reference>
<reference key="6">
    <citation type="submission" date="2005-09" db="EMBL/GenBank/DDBJ databases">
        <authorList>
            <person name="Mural R.J."/>
            <person name="Istrail S."/>
            <person name="Sutton G.G."/>
            <person name="Florea L."/>
            <person name="Halpern A.L."/>
            <person name="Mobarry C.M."/>
            <person name="Lippert R."/>
            <person name="Walenz B."/>
            <person name="Shatkay H."/>
            <person name="Dew I."/>
            <person name="Miller J.R."/>
            <person name="Flanigan M.J."/>
            <person name="Edwards N.J."/>
            <person name="Bolanos R."/>
            <person name="Fasulo D."/>
            <person name="Halldorsson B.V."/>
            <person name="Hannenhalli S."/>
            <person name="Turner R."/>
            <person name="Yooseph S."/>
            <person name="Lu F."/>
            <person name="Nusskern D.R."/>
            <person name="Shue B.C."/>
            <person name="Zheng X.H."/>
            <person name="Zhong F."/>
            <person name="Delcher A.L."/>
            <person name="Huson D.H."/>
            <person name="Kravitz S.A."/>
            <person name="Mouchard L."/>
            <person name="Reinert K."/>
            <person name="Remington K.A."/>
            <person name="Clark A.G."/>
            <person name="Waterman M.S."/>
            <person name="Eichler E.E."/>
            <person name="Adams M.D."/>
            <person name="Hunkapiller M.W."/>
            <person name="Myers E.W."/>
            <person name="Venter J.C."/>
        </authorList>
    </citation>
    <scope>NUCLEOTIDE SEQUENCE [LARGE SCALE GENOMIC DNA]</scope>
</reference>
<reference key="7">
    <citation type="journal article" date="1999" name="J. Neurochem.">
        <title>Presenilins interact with armadillo proteins including neural-specific plakophilin-related protein and beta-catenin.</title>
        <authorList>
            <person name="Levesque G."/>
            <person name="Yu G."/>
            <person name="Nishimura M."/>
            <person name="Zhang D.M."/>
            <person name="Levesque L."/>
            <person name="Yu H."/>
            <person name="Xu D."/>
            <person name="Liang Y."/>
            <person name="Rogaeva E.A."/>
            <person name="Ikeda M."/>
            <person name="Duthie M."/>
            <person name="Murgolo N."/>
            <person name="Wang L."/>
            <person name="VanderVere P."/>
            <person name="Bayne M.L."/>
            <person name="Strader C.D."/>
            <person name="Rommens J.M."/>
            <person name="Fraser P.E."/>
            <person name="St George-Hyslop P.H."/>
        </authorList>
    </citation>
    <scope>NUCLEOTIDE SEQUENCE [MRNA] OF 186-1225 (ISOFORM 1)</scope>
    <scope>INTERACTION WITH PSEN1</scope>
    <source>
        <tissue>Brain</tissue>
    </source>
</reference>
<reference key="8">
    <citation type="journal article" date="1997" name="Differentiation">
        <title>Identification and localization of a neurally expressed member of the plakoglobin/armadillo multigene family.</title>
        <authorList>
            <person name="Paffenholz R."/>
            <person name="Franke W.W."/>
        </authorList>
    </citation>
    <scope>NUCLEOTIDE SEQUENCE [MRNA] OF 350-1225 (ISOFORM 1)</scope>
    <scope>ALTERNATIVE SPLICING</scope>
    <source>
        <tissue>Fetal brain</tissue>
    </source>
</reference>
<reference key="9">
    <citation type="submission" date="1996-09" db="EMBL/GenBank/DDBJ databases">
        <title>A novel gene from the arm family.</title>
        <authorList>
            <person name="Fraser P.E."/>
            <person name="Levesque G."/>
            <person name="Rogaeva E.A."/>
            <person name="Yu G."/>
            <person name="St George-Hyslop P.H."/>
        </authorList>
    </citation>
    <scope>NUCLEOTIDE SEQUENCE [MRNA] OF 689-1225 (ISOFORM 1)</scope>
</reference>
<reference key="10">
    <citation type="submission" date="1997-11" db="EMBL/GenBank/DDBJ databases">
        <authorList>
            <person name="Yu W."/>
            <person name="Sarginson J."/>
            <person name="Gibbs R.A."/>
        </authorList>
    </citation>
    <scope>NUCLEOTIDE SEQUENCE [LARGE SCALE MRNA] OF 746-1225 (ISOFORM 1)</scope>
    <source>
        <tissue>Brain</tissue>
    </source>
</reference>
<reference key="11">
    <citation type="journal article" date="1997" name="Genome Res.">
        <title>Isolation of cDNAs from the Cri-du-chat critical region by direct screening of a chromosome 5-specific cDNA library.</title>
        <authorList>
            <person name="Simmons A.D."/>
            <person name="Overhauser J."/>
            <person name="Lovett M."/>
        </authorList>
    </citation>
    <scope>NUCLEOTIDE SEQUENCE [MRNA] OF 865-1225 (ISOFORMS 1/2)</scope>
</reference>
<reference key="12">
    <citation type="journal article" date="2008" name="J. Biol. Chem.">
        <title>Delta-catenin-induced dendritic morphogenesis. An essential role of p190RhoGEF interaction through Akt1-mediated phosphorylation.</title>
        <authorList>
            <person name="Kim H."/>
            <person name="Han J.-R."/>
            <person name="Park J."/>
            <person name="Oh M."/>
            <person name="James S.E."/>
            <person name="Chang S."/>
            <person name="Lu Q."/>
            <person name="Lee K.Y."/>
            <person name="Ki H."/>
            <person name="Song W.-J."/>
            <person name="Kim K."/>
        </authorList>
    </citation>
    <scope>INTERACTION WITH ARHGEF28</scope>
</reference>
<reference key="13">
    <citation type="journal article" date="2009" name="J. Biol. Chem.">
        <title>GSK-3 phosphorylates delta-catenin and negatively regulates its stability via ubiquitination/proteosome-mediated proteolysis.</title>
        <authorList>
            <person name="Oh M."/>
            <person name="Kim H."/>
            <person name="Yang I."/>
            <person name="Park J.H."/>
            <person name="Cong W.T."/>
            <person name="Baek M.C."/>
            <person name="Bareiss S."/>
            <person name="Ki H."/>
            <person name="Lu Q."/>
            <person name="No J."/>
            <person name="Kwon I."/>
            <person name="Choi J.K."/>
            <person name="Kim K."/>
        </authorList>
    </citation>
    <scope>INTERACTION WITH GSK3A AND GSK3B</scope>
    <scope>PHOSPHORYLATION BY GSK3B</scope>
</reference>
<reference key="14">
    <citation type="journal article" date="2009" name="J. Cell Sci.">
        <title>PDZ-domain-directed basolateral targeting of the peripheral membrane protein FRMPD2 in epithelial cells.</title>
        <authorList>
            <person name="Stenzel N."/>
            <person name="Fetzer C.P."/>
            <person name="Heumann R."/>
            <person name="Erdmann K.S."/>
        </authorList>
    </citation>
    <scope>INTERACTION WITH FRMPD2</scope>
</reference>
<reference key="15">
    <citation type="journal article" date="2011" name="PLoS ONE">
        <title>Identification of novel NPRAP/delta-catenin-interacting proteins and the direct association of NPRAP with dynamin 2.</title>
        <authorList>
            <person name="Koutras C."/>
            <person name="Levesque G."/>
        </authorList>
    </citation>
    <scope>SUBCELLULAR LOCATION</scope>
    <scope>INTERACTION WITH DNM2</scope>
</reference>
<reference key="16">
    <citation type="journal article" date="2014" name="Mol. Biol. Cell">
        <title>DIPA-family coiled-coils bind conserved isoform-specific head domain of p120-catenin family: potential roles in hydrocephalus and heterotopia.</title>
        <authorList>
            <person name="Markham N.O."/>
            <person name="Doll C.A."/>
            <person name="Dohn M.R."/>
            <person name="Miller R.K."/>
            <person name="Yu H."/>
            <person name="Coffey R.J."/>
            <person name="McCrea P.D."/>
            <person name="Gamse J.T."/>
            <person name="Reynolds A.B."/>
        </authorList>
    </citation>
    <scope>INTERACTION WITH CCDC85B</scope>
</reference>
<reference key="17">
    <citation type="journal article" date="2015" name="Nature">
        <title>Loss of delta-catenin function in severe autism.</title>
        <authorList>
            <person name="Turner T.N."/>
            <person name="Sharma K."/>
            <person name="Oh E.C."/>
            <person name="Liu Y.P."/>
            <person name="Collins R.L."/>
            <person name="Sosa M.X."/>
            <person name="Auer D.R."/>
            <person name="Brand H."/>
            <person name="Sanders S.J."/>
            <person name="Moreno-De-Luca D."/>
            <person name="Pihur V."/>
            <person name="Plona T."/>
            <person name="Pike K."/>
            <person name="Soppet D.R."/>
            <person name="Smith M.W."/>
            <person name="Cheung S.W."/>
            <person name="Martin C.L."/>
            <person name="State M.W."/>
            <person name="Talkowski M.E."/>
            <person name="Cook E."/>
            <person name="Huganir R."/>
            <person name="Katsanis N."/>
            <person name="Chakravarti A."/>
        </authorList>
    </citation>
    <scope>FUNCTION</scope>
    <scope>TISSUE SPECIFICITY</scope>
    <scope>INTERACTION WITH CTNNB1</scope>
    <scope>INVOLVEMENT IN AUTISM</scope>
    <scope>VARIANTS SER-34; LEU-189; LEU-224; CYS-275; HIS-330; HIS-454; ASN-465; THR-482; PRO-507; CYS-713 AND MET-862</scope>
    <scope>CHARACTERIZATION OF VARIANTS SER-34; LEU-189; LEU-224; CYS-275; HIS-330; HIS-454; ASN-465; THR-482; PRO-507; CYS-713; ARG-810 AND MET-862</scope>
</reference>
<reference key="18">
    <citation type="journal article" date="2006" name="Science">
        <title>The consensus coding sequences of human breast and colorectal cancers.</title>
        <authorList>
            <person name="Sjoeblom T."/>
            <person name="Jones S."/>
            <person name="Wood L.D."/>
            <person name="Parsons D.W."/>
            <person name="Lin J."/>
            <person name="Barber T.D."/>
            <person name="Mandelker D."/>
            <person name="Leary R.J."/>
            <person name="Ptak J."/>
            <person name="Silliman N."/>
            <person name="Szabo S."/>
            <person name="Buckhaults P."/>
            <person name="Farrell C."/>
            <person name="Meeh P."/>
            <person name="Markowitz S.D."/>
            <person name="Willis J."/>
            <person name="Dawson D."/>
            <person name="Willson J.K.V."/>
            <person name="Gazdar A.F."/>
            <person name="Hartigan J."/>
            <person name="Wu L."/>
            <person name="Liu C."/>
            <person name="Parmigiani G."/>
            <person name="Park B.H."/>
            <person name="Bachman K.E."/>
            <person name="Papadopoulos N."/>
            <person name="Vogelstein B."/>
            <person name="Kinzler K.W."/>
            <person name="Velculescu V.E."/>
        </authorList>
    </citation>
    <scope>VARIANT [LARGE SCALE ANALYSIS] SER-1159</scope>
</reference>
<comment type="function">
    <text evidence="3 14 16">Has a critical role in neuronal development, particularly in the formation and/or maintenance of dendritic spines and synapses (PubMed:25807484). Involved in the regulation of Wnt signaling (PubMed:25807484). It probably acts on beta-catenin turnover, facilitating beta-catenin interaction with GSK3B, phosphorylation, ubiquitination and degradation (By similarity). Functions as a transcriptional activator when bound to ZBTB33 (By similarity). May be involved in neuronal cell adhesion and tissue morphogenesis and integrity by regulating adhesion molecules.</text>
</comment>
<comment type="subunit">
    <text evidence="2 3 6 7 9 10 11 12 13 14 15">Binds to E-cadherin at a juxtamembrane site within the cytoplasmic domain (By similarity). Interacts with PDZD2 (By similarity). Interacts with ZBTB33 (By similarity). Binds to PSEN1 (PubMed:10037471, PubMed:10208590, PubMed:9223106). Interacts with ARHGEF28 (PubMed:17993462). Interacts (via the extreme C-terminus) with FRMPD2 (via the PDZ 2 domain) (PubMed:19706687). Interacts with CDK5 (By similarity). Interacts with CTNNB1 (PubMed:25807484). Interacts with GSK3A and GSK3B (PubMed:19706605). Interacts with DNM2 (PubMed:22022388). Interacts with CCDC85B (PubMed:25009281).</text>
</comment>
<comment type="interaction">
    <interactant intactId="EBI-7266482">
        <id>Q9UQB3</id>
    </interactant>
    <interactant intactId="EBI-357481">
        <id>Q12959</id>
        <label>DLG1</label>
    </interactant>
    <organismsDiffer>false</organismsDiffer>
    <experiments>2</experiments>
</comment>
<comment type="interaction">
    <interactant intactId="EBI-7266482">
        <id>Q9UQB3</id>
    </interactant>
    <interactant intactId="EBI-357345">
        <id>Q14160</id>
        <label>SCRIB</label>
    </interactant>
    <organismsDiffer>false</organismsDiffer>
    <experiments>2</experiments>
</comment>
<comment type="subcellular location">
    <subcellularLocation>
        <location evidence="3">Nucleus</location>
    </subcellularLocation>
    <subcellularLocation>
        <location evidence="3">Cell junction</location>
        <location evidence="3">Adherens junction</location>
    </subcellularLocation>
    <subcellularLocation>
        <location evidence="2">Cell projection</location>
        <location evidence="2">Dendrite</location>
    </subcellularLocation>
    <subcellularLocation>
        <location evidence="12">Perikaryon</location>
    </subcellularLocation>
</comment>
<comment type="alternative products">
    <event type="alternative splicing"/>
    <isoform>
        <id>Q9UQB3-1</id>
        <name>1</name>
        <name>NPRAPa</name>
        <sequence type="displayed"/>
    </isoform>
    <isoform>
        <id>Q9UQB3-2</id>
        <name>2</name>
        <name>NPRAPc</name>
        <sequence type="described" ref="VSP_006746"/>
    </isoform>
    <text>Additional isoforms seem to exist.</text>
</comment>
<comment type="tissue specificity">
    <text evidence="14">Expressed in brain; highest expression is observed in fetal brain (PubMed:25807484).</text>
</comment>
<comment type="PTM">
    <text evidence="1">O-glycosylated.</text>
</comment>
<comment type="PTM">
    <text evidence="2 10">Phosphorylated by CDK5 (By similarity). Phosphorylated by GSK3B (PubMed:19706605).</text>
</comment>
<comment type="disease">
    <text evidence="14">Defects in CTNND2, including deleterious missense and copy number variants (CNVs) are involved in autism, a complex multifactorial, pervasive developmental disorder characterized by impairments in reciprocal social interaction and communication, restricted and stereotyped patterns of interests and activities, and the presence of developmental abnormalities by 3 years of age. Most individuals with autism also manifest moderate intellectual disability.</text>
</comment>
<comment type="similarity">
    <text evidence="18">Belongs to the beta-catenin family.</text>
</comment>
<comment type="sequence caution" evidence="18">
    <conflict type="erroneous initiation">
        <sequence resource="EMBL-CDS" id="AAB68599"/>
    </conflict>
    <text>Truncated N-terminus.</text>
</comment>
<comment type="sequence caution" evidence="18">
    <conflict type="frameshift">
        <sequence resource="EMBL-CDS" id="AAB88185"/>
    </conflict>
</comment>
<sequence length="1225" mass="132656">MFARKPPGAAPLGAMPVPDQPSSASEKTSSLSPGLNTSNGDGSETETTSAILASVKEQELQFERLTRELEAERQIVASQLERCKLGSETGSMSSMSSAEEQFQWQSQDGQKDIEDELTTGLELVDSCIRSLQESGILDPQDYSTGERPSLLSQSALQLNSKPEGSFQYPASYHSNQTLALGETTPSQLPARGTQARATGQSFSQGTTSRAGHLAGPEPAPPPPPPPREPFAPSLGSAFHLPDAPPAAAAAALYYSSSTLPAPPRGGSPLAAPQGGSPTKLQRGGSAPEGATYAAPRGSSPKQSPSRLAKSYSTSSPINIVVSSAGLSPIRVTSPPTVQSTISSSPIHQLSSTIGTYATLSPTKRLVHASEQYSKHSQELYATATLQRPGSLAAGSRASYSSQHGHLGPELRALQSPEHHIDPIYEDRVYQKPPMRSLSQSQGDPLPPAHTGTYRTSTAPSSPGVDSVPLQRTGSQHGPQNAAAATFQRASYAAGPASNYADPYRQLQYCPSVESPYSKSGPALPPEGTLARSPSIDSIQKDPREFGWRDPELPEVIQMLQHQFPSVQSNAAAYLQHLCFGDNKIKAEIRRQGGIQLLVDLLDHRMTEVHRSACGALRNLVYGKANDDNKIALKNCGGIPALVRLLRKTTDLEIRELVTGVLWNLSSCDALKMPIIQDALAVLTNAVIIPHSGWENSPLQDDRKIQLHSSQVLRNATGCLRNVSSAGEEARRRMRECDGLTDALLYVIQSALGSSEIDSKTVENCVCILRNLSYRLAAETSQGQHMGTDELDGLLCGEANGKDAESSGCWGKKKKKKKSQDQWDGVGPLPDCAEPPKGIQMLWHPSIVKPYLTLLSECSNPDTLEGAAGALQNLAAGSWKWSVYIRAAVRKEKGLPILVELLRIDNDRVVCAVATALRNMALDVRNKELIGKYAMRDLVHRLPGGNNSNNTASKAMSDDTVTAVCCTLHEVITKNMENAKALRDAGGIEKLVGISKSKGDKHSPKVVKAASQVLNSMWQYRDLRSLYKKDGWSQYHFVASSSTIERDRQRPYSSSRTPSISPVRVSPNNRSASAPASPREMISLKERKTDYECTGSNATYHGAKGEHTSRKDAMTAQNTGISTLYRNSYGAPAEDIKHNQVSAQPVPQEPSRKDYETYQPFQNSTRNYDESFFEDQVHHRPPASEYTMHLGLKSTGNYVDFYSAARPYSELNYETSHYPASPDSWV</sequence>
<evidence type="ECO:0000250" key="1"/>
<evidence type="ECO:0000250" key="2">
    <source>
        <dbReference type="UniProtKB" id="O35116"/>
    </source>
</evidence>
<evidence type="ECO:0000250" key="3">
    <source>
        <dbReference type="UniProtKB" id="O35927"/>
    </source>
</evidence>
<evidence type="ECO:0000255" key="4"/>
<evidence type="ECO:0000256" key="5">
    <source>
        <dbReference type="SAM" id="MobiDB-lite"/>
    </source>
</evidence>
<evidence type="ECO:0000269" key="6">
    <source>
    </source>
</evidence>
<evidence type="ECO:0000269" key="7">
    <source>
    </source>
</evidence>
<evidence type="ECO:0000269" key="8">
    <source>
    </source>
</evidence>
<evidence type="ECO:0000269" key="9">
    <source>
    </source>
</evidence>
<evidence type="ECO:0000269" key="10">
    <source>
    </source>
</evidence>
<evidence type="ECO:0000269" key="11">
    <source>
    </source>
</evidence>
<evidence type="ECO:0000269" key="12">
    <source>
    </source>
</evidence>
<evidence type="ECO:0000269" key="13">
    <source>
    </source>
</evidence>
<evidence type="ECO:0000269" key="14">
    <source>
    </source>
</evidence>
<evidence type="ECO:0000269" key="15">
    <source>
    </source>
</evidence>
<evidence type="ECO:0000269" key="16">
    <source>
    </source>
</evidence>
<evidence type="ECO:0000269" key="17">
    <source ref="4"/>
</evidence>
<evidence type="ECO:0000305" key="18"/>
<accession>Q9UQB3</accession>
<accession>B0FTZ7</accession>
<accession>O00379</accession>
<accession>O15390</accession>
<accession>O43206</accession>
<accession>O43840</accession>
<accession>Q13589</accession>
<accession>Q9UM66</accession>
<accession>Q9UPM3</accession>
<name>CTND2_HUMAN</name>
<feature type="chain" id="PRO_0000064299" description="Catenin delta-2">
    <location>
        <begin position="1"/>
        <end position="1225"/>
    </location>
</feature>
<feature type="repeat" description="ARM 1">
    <location>
        <begin position="394"/>
        <end position="438"/>
    </location>
</feature>
<feature type="repeat" description="ARM 2">
    <location>
        <begin position="540"/>
        <end position="579"/>
    </location>
</feature>
<feature type="repeat" description="ARM 3">
    <location>
        <begin position="582"/>
        <end position="621"/>
    </location>
</feature>
<feature type="repeat" description="ARM 4">
    <location>
        <begin position="626"/>
        <end position="666"/>
    </location>
</feature>
<feature type="repeat" description="ARM 5">
    <location>
        <begin position="682"/>
        <end position="724"/>
    </location>
</feature>
<feature type="repeat" description="ARM 6">
    <location>
        <begin position="728"/>
        <end position="773"/>
    </location>
</feature>
<feature type="repeat" description="ARM 7">
    <location>
        <begin position="835"/>
        <end position="875"/>
    </location>
</feature>
<feature type="repeat" description="ARM 8">
    <location>
        <begin position="882"/>
        <end position="921"/>
    </location>
</feature>
<feature type="repeat" description="ARM 9">
    <location>
        <begin position="975"/>
        <end position="1018"/>
    </location>
</feature>
<feature type="region of interest" description="Disordered" evidence="5">
    <location>
        <begin position="1"/>
        <end position="51"/>
    </location>
</feature>
<feature type="region of interest" description="Disordered" evidence="5">
    <location>
        <begin position="87"/>
        <end position="117"/>
    </location>
</feature>
<feature type="region of interest" description="Disordered" evidence="5">
    <location>
        <begin position="134"/>
        <end position="242"/>
    </location>
</feature>
<feature type="region of interest" description="Disordered" evidence="5">
    <location>
        <begin position="256"/>
        <end position="312"/>
    </location>
</feature>
<feature type="region of interest" description="Disordered" evidence="5">
    <location>
        <begin position="432"/>
        <end position="483"/>
    </location>
</feature>
<feature type="region of interest" description="Disordered" evidence="5">
    <location>
        <begin position="514"/>
        <end position="542"/>
    </location>
</feature>
<feature type="region of interest" description="Disordered" evidence="5">
    <location>
        <begin position="1042"/>
        <end position="1077"/>
    </location>
</feature>
<feature type="coiled-coil region" evidence="4">
    <location>
        <begin position="49"/>
        <end position="84"/>
    </location>
</feature>
<feature type="compositionally biased region" description="Polar residues" evidence="5">
    <location>
        <begin position="20"/>
        <end position="51"/>
    </location>
</feature>
<feature type="compositionally biased region" description="Polar residues" evidence="5">
    <location>
        <begin position="98"/>
        <end position="108"/>
    </location>
</feature>
<feature type="compositionally biased region" description="Low complexity" evidence="5">
    <location>
        <begin position="149"/>
        <end position="160"/>
    </location>
</feature>
<feature type="compositionally biased region" description="Polar residues" evidence="5">
    <location>
        <begin position="172"/>
        <end position="187"/>
    </location>
</feature>
<feature type="compositionally biased region" description="Polar residues" evidence="5">
    <location>
        <begin position="195"/>
        <end position="209"/>
    </location>
</feature>
<feature type="compositionally biased region" description="Pro residues" evidence="5">
    <location>
        <begin position="217"/>
        <end position="229"/>
    </location>
</feature>
<feature type="compositionally biased region" description="Polar residues" evidence="5">
    <location>
        <begin position="299"/>
        <end position="312"/>
    </location>
</feature>
<feature type="compositionally biased region" description="Polar residues" evidence="5">
    <location>
        <begin position="469"/>
        <end position="478"/>
    </location>
</feature>
<feature type="compositionally biased region" description="Polar residues" evidence="5">
    <location>
        <begin position="1050"/>
        <end position="1059"/>
    </location>
</feature>
<feature type="compositionally biased region" description="Low complexity" evidence="5">
    <location>
        <begin position="1065"/>
        <end position="1077"/>
    </location>
</feature>
<feature type="modified residue" description="Omega-N-methylarginine" evidence="3">
    <location>
        <position position="209"/>
    </location>
</feature>
<feature type="modified residue" description="Omega-N-methylarginine" evidence="3">
    <location>
        <position position="264"/>
    </location>
</feature>
<feature type="modified residue" description="Phosphoserine" evidence="3">
    <location>
        <position position="267"/>
    </location>
</feature>
<feature type="modified residue" description="Phosphoserine" evidence="3">
    <location>
        <position position="276"/>
    </location>
</feature>
<feature type="modified residue" description="Omega-N-methylarginine" evidence="3">
    <location>
        <position position="282"/>
    </location>
</feature>
<feature type="modified residue" description="Omega-N-methylarginine" evidence="3">
    <location>
        <position position="296"/>
    </location>
</feature>
<feature type="modified residue" description="Phosphoserine" evidence="3">
    <location>
        <position position="327"/>
    </location>
</feature>
<feature type="modified residue" description="Phosphoserine" evidence="3">
    <location>
        <position position="360"/>
    </location>
</feature>
<feature type="modified residue" description="Phosphoserine" evidence="3">
    <location>
        <position position="415"/>
    </location>
</feature>
<feature type="modified residue" description="Phosphoserine" evidence="3">
    <location>
        <position position="461"/>
    </location>
</feature>
<feature type="modified residue" description="Phosphoserine" evidence="3">
    <location>
        <position position="514"/>
    </location>
</feature>
<feature type="modified residue" description="Phosphotyrosine" evidence="3">
    <location>
        <position position="516"/>
    </location>
</feature>
<feature type="modified residue" description="Phosphoserine" evidence="3">
    <location>
        <position position="1065"/>
    </location>
</feature>
<feature type="modified residue" description="Phosphoserine" evidence="3">
    <location>
        <position position="1076"/>
    </location>
</feature>
<feature type="splice variant" id="VSP_006746" description="In isoform 2." evidence="18">
    <location>
        <begin position="823"/>
        <end position="880"/>
    </location>
</feature>
<feature type="sequence variant" id="VAR_073387" description="Found in autism; likely pathogenic; hypomorphic variant affecting dendritic spines development and maintenance; results in reduced interaction with CTNNB1; dbSNP:rs151129181." evidence="14">
    <original>G</original>
    <variation>S</variation>
    <location>
        <position position="34"/>
    </location>
</feature>
<feature type="sequence variant" id="VAR_073388" description="Found in autism; likely pathogenic; hypomorphic variant affecting Wnt signaling; dbSNP:rs149573037." evidence="14">
    <original>P</original>
    <variation>L</variation>
    <location>
        <position position="189"/>
    </location>
</feature>
<feature type="sequence variant" id="VAR_073389" description="Found in autism; likely pathogenic; hypomorphic variant affecting Wnt signaling; dbSNP:rs769623284." evidence="14">
    <original>P</original>
    <variation>L</variation>
    <location>
        <position position="224"/>
    </location>
</feature>
<feature type="sequence variant" id="VAR_062270" description="Found in patients with autism; uncertain significance; has no effect on Wnt signaling; dbSNP:rs61749844." evidence="14 17">
    <original>G</original>
    <variation>C</variation>
    <location>
        <position position="275"/>
    </location>
</feature>
<feature type="sequence variant" id="VAR_073390" description="Has no effect on Wnt signaling; dbSNP:rs199506424." evidence="14">
    <original>R</original>
    <variation>H</variation>
    <location>
        <position position="330"/>
    </location>
</feature>
<feature type="sequence variant" id="VAR_073391" description="Found in autism; likely pathogenic; hypomorphic variant affecting Wnt signaling; dbSNP:rs750266236." evidence="14">
    <original>R</original>
    <variation>H</variation>
    <location>
        <position position="454"/>
    </location>
</feature>
<feature type="sequence variant" id="VAR_073392" description="Has no effect on Wnt signaling; dbSNP:rs200377770." evidence="14">
    <original>D</original>
    <variation>N</variation>
    <location>
        <position position="465"/>
    </location>
</feature>
<feature type="sequence variant" id="VAR_062271" description="Has no effect on Wnt signaling; dbSNP:rs61750706." evidence="14 17">
    <original>A</original>
    <variation>T</variation>
    <location>
        <position position="482"/>
    </location>
</feature>
<feature type="sequence variant" id="VAR_073393" description="Found in autism; likely pathogenic; hypomorphic variant affecting Wnt signaling; dbSNP:rs142843736." evidence="14">
    <original>Q</original>
    <variation>P</variation>
    <location>
        <position position="507"/>
    </location>
</feature>
<feature type="sequence variant" id="VAR_073394" description="Found in autism; likely pathogenic; loss-of-function variant affecting dendritic spines development and maintenance; results in reduced interaction with CTNNB1; dbSNP:rs768575356." evidence="14">
    <original>R</original>
    <variation>C</variation>
    <location>
        <position position="713"/>
    </location>
</feature>
<feature type="sequence variant" id="VAR_062272" description="Has no effect on Wnt signaling; dbSNP:rs61754599." evidence="14 17">
    <original>G</original>
    <variation>R</variation>
    <location>
        <position position="810"/>
    </location>
</feature>
<feature type="sequence variant" id="VAR_073395" description="Found in patients with autism; uncertain significance; has no effect on Wnt signaling; dbSNP:rs773517967." evidence="14">
    <original>T</original>
    <variation>M</variation>
    <location>
        <position position="862"/>
    </location>
</feature>
<feature type="sequence variant" id="VAR_036162" description="In a colorectal cancer sample; somatic mutation; dbSNP:rs1736074646." evidence="8">
    <original>P</original>
    <variation>S</variation>
    <location>
        <position position="1159"/>
    </location>
</feature>
<feature type="sequence conflict" description="In Ref. 1; AAC63103." evidence="18" ref="1">
    <original>D</original>
    <variation>V</variation>
    <location>
        <position position="426"/>
    </location>
</feature>
<feature type="sequence conflict" description="In Ref. 1; AAC63103." evidence="18" ref="1">
    <original>D</original>
    <variation>V</variation>
    <location>
        <position position="443"/>
    </location>
</feature>
<feature type="sequence conflict" description="In Ref. 1; AAC63103." evidence="18" ref="1">
    <original>A</original>
    <variation>P</variation>
    <location>
        <position position="725"/>
    </location>
</feature>
<feature type="sequence conflict" description="In Ref. 1; AAC63103 and 11; AAB96357." evidence="18" ref="1 11">
    <original>L</original>
    <variation>R</variation>
    <location>
        <position position="894"/>
    </location>
</feature>
<feature type="sequence conflict" description="In Ref. 1; AAC63103 and 11; AAB96357." evidence="18" ref="1 11">
    <original>V</original>
    <variation>A</variation>
    <location>
        <position position="909"/>
    </location>
</feature>
<feature type="sequence conflict" description="In Ref. 8; AAB97957." evidence="18" ref="8">
    <original>A</original>
    <variation>G</variation>
    <location>
        <position position="980"/>
    </location>
</feature>
<feature type="sequence conflict" description="In Ref. 7; AAD00453 and 9; AAB68599." evidence="18" ref="7 9">
    <original>A</original>
    <variation>G</variation>
    <location>
        <position position="1102"/>
    </location>
</feature>
<organism>
    <name type="scientific">Homo sapiens</name>
    <name type="common">Human</name>
    <dbReference type="NCBI Taxonomy" id="9606"/>
    <lineage>
        <taxon>Eukaryota</taxon>
        <taxon>Metazoa</taxon>
        <taxon>Chordata</taxon>
        <taxon>Craniata</taxon>
        <taxon>Vertebrata</taxon>
        <taxon>Euteleostomi</taxon>
        <taxon>Mammalia</taxon>
        <taxon>Eutheria</taxon>
        <taxon>Euarchontoglires</taxon>
        <taxon>Primates</taxon>
        <taxon>Haplorrhini</taxon>
        <taxon>Catarrhini</taxon>
        <taxon>Hominidae</taxon>
        <taxon>Homo</taxon>
    </lineage>
</organism>
<gene>
    <name type="primary">CTNND2</name>
    <name type="synonym">NPRAP</name>
</gene>
<protein>
    <recommendedName>
        <fullName>Catenin delta-2</fullName>
    </recommendedName>
    <alternativeName>
        <fullName>Delta-catenin</fullName>
    </alternativeName>
    <alternativeName>
        <fullName>GT24</fullName>
    </alternativeName>
    <alternativeName>
        <fullName>Neural plakophilin-related ARM-repeat protein</fullName>
        <shortName>NPRAP</shortName>
    </alternativeName>
    <alternativeName>
        <fullName>Neurojungin</fullName>
    </alternativeName>
</protein>